<sequence>MSNFAIILAAGKGTRMKSDLPKVLHKVAGISMLEHVFRSVGAIQPEKTVTVVGHKAELVEEVLTGQTEFVTQSEQLGTGHAVMMTEPILEGLSGHTLVIAGDTPLITGESLKNLIDFHINHKNVATILTAETDNPFGYGRIVRNDNAEVLRIVEQKDATDFEKQIKEINTGTYVFDNERLFEALKNINTNNAQGEYYITDVIGIFRETGEKVGAYTLKDFDESLGVNDRVALATAESVMRRRINHKHMVNGVSFVNPEATYIDIDVEIAPEVQIEANVTLKGQTKIGAETVLTNGTYVVDSTIGAGAVITNSMIEESSVADGVTVGPYAHIRPNSSLGAQVHIGNFVEVKGSSIGENTKAGHLTYIGNCEVGSNVNFGAGTITVNYDGKNKYKTVIGDNVFVGSNSTIIAPVELGDNSLVGAGSTITKDVPADAIAIGRGRQINKDEYATRLPHHPKNQ</sequence>
<dbReference type="EC" id="2.7.7.23" evidence="1"/>
<dbReference type="EC" id="2.3.1.157" evidence="1"/>
<dbReference type="EMBL" id="CP000921">
    <property type="protein sequence ID" value="ACO22919.1"/>
    <property type="molecule type" value="Genomic_DNA"/>
</dbReference>
<dbReference type="RefSeq" id="WP_000064415.1">
    <property type="nucleotide sequence ID" value="NC_012469.1"/>
</dbReference>
<dbReference type="SMR" id="C1CRR4"/>
<dbReference type="KEGG" id="snt:SPT_1216"/>
<dbReference type="HOGENOM" id="CLU_029499_15_2_9"/>
<dbReference type="UniPathway" id="UPA00113">
    <property type="reaction ID" value="UER00532"/>
</dbReference>
<dbReference type="UniPathway" id="UPA00113">
    <property type="reaction ID" value="UER00533"/>
</dbReference>
<dbReference type="UniPathway" id="UPA00973"/>
<dbReference type="GO" id="GO:0005737">
    <property type="term" value="C:cytoplasm"/>
    <property type="evidence" value="ECO:0007669"/>
    <property type="project" value="UniProtKB-SubCell"/>
</dbReference>
<dbReference type="GO" id="GO:0016020">
    <property type="term" value="C:membrane"/>
    <property type="evidence" value="ECO:0007669"/>
    <property type="project" value="GOC"/>
</dbReference>
<dbReference type="GO" id="GO:0019134">
    <property type="term" value="F:glucosamine-1-phosphate N-acetyltransferase activity"/>
    <property type="evidence" value="ECO:0007669"/>
    <property type="project" value="UniProtKB-UniRule"/>
</dbReference>
<dbReference type="GO" id="GO:0000287">
    <property type="term" value="F:magnesium ion binding"/>
    <property type="evidence" value="ECO:0007669"/>
    <property type="project" value="UniProtKB-UniRule"/>
</dbReference>
<dbReference type="GO" id="GO:0003977">
    <property type="term" value="F:UDP-N-acetylglucosamine diphosphorylase activity"/>
    <property type="evidence" value="ECO:0007669"/>
    <property type="project" value="UniProtKB-UniRule"/>
</dbReference>
<dbReference type="GO" id="GO:0000902">
    <property type="term" value="P:cell morphogenesis"/>
    <property type="evidence" value="ECO:0007669"/>
    <property type="project" value="UniProtKB-UniRule"/>
</dbReference>
<dbReference type="GO" id="GO:0071555">
    <property type="term" value="P:cell wall organization"/>
    <property type="evidence" value="ECO:0007669"/>
    <property type="project" value="UniProtKB-KW"/>
</dbReference>
<dbReference type="GO" id="GO:0009245">
    <property type="term" value="P:lipid A biosynthetic process"/>
    <property type="evidence" value="ECO:0007669"/>
    <property type="project" value="UniProtKB-UniRule"/>
</dbReference>
<dbReference type="GO" id="GO:0009252">
    <property type="term" value="P:peptidoglycan biosynthetic process"/>
    <property type="evidence" value="ECO:0007669"/>
    <property type="project" value="UniProtKB-UniRule"/>
</dbReference>
<dbReference type="GO" id="GO:0008360">
    <property type="term" value="P:regulation of cell shape"/>
    <property type="evidence" value="ECO:0007669"/>
    <property type="project" value="UniProtKB-KW"/>
</dbReference>
<dbReference type="GO" id="GO:0006048">
    <property type="term" value="P:UDP-N-acetylglucosamine biosynthetic process"/>
    <property type="evidence" value="ECO:0007669"/>
    <property type="project" value="UniProtKB-UniPathway"/>
</dbReference>
<dbReference type="CDD" id="cd02540">
    <property type="entry name" value="GT2_GlmU_N_bac"/>
    <property type="match status" value="1"/>
</dbReference>
<dbReference type="CDD" id="cd03353">
    <property type="entry name" value="LbH_GlmU_C"/>
    <property type="match status" value="1"/>
</dbReference>
<dbReference type="Gene3D" id="2.160.10.10">
    <property type="entry name" value="Hexapeptide repeat proteins"/>
    <property type="match status" value="1"/>
</dbReference>
<dbReference type="Gene3D" id="3.90.550.10">
    <property type="entry name" value="Spore Coat Polysaccharide Biosynthesis Protein SpsA, Chain A"/>
    <property type="match status" value="1"/>
</dbReference>
<dbReference type="HAMAP" id="MF_01631">
    <property type="entry name" value="GlmU"/>
    <property type="match status" value="1"/>
</dbReference>
<dbReference type="InterPro" id="IPR005882">
    <property type="entry name" value="Bifunctional_GlmU"/>
</dbReference>
<dbReference type="InterPro" id="IPR050065">
    <property type="entry name" value="GlmU-like"/>
</dbReference>
<dbReference type="InterPro" id="IPR038009">
    <property type="entry name" value="GlmU_C_LbH"/>
</dbReference>
<dbReference type="InterPro" id="IPR001451">
    <property type="entry name" value="Hexapep"/>
</dbReference>
<dbReference type="InterPro" id="IPR018357">
    <property type="entry name" value="Hexapep_transf_CS"/>
</dbReference>
<dbReference type="InterPro" id="IPR005835">
    <property type="entry name" value="NTP_transferase_dom"/>
</dbReference>
<dbReference type="InterPro" id="IPR029044">
    <property type="entry name" value="Nucleotide-diphossugar_trans"/>
</dbReference>
<dbReference type="InterPro" id="IPR011004">
    <property type="entry name" value="Trimer_LpxA-like_sf"/>
</dbReference>
<dbReference type="NCBIfam" id="TIGR01173">
    <property type="entry name" value="glmU"/>
    <property type="match status" value="1"/>
</dbReference>
<dbReference type="NCBIfam" id="NF010934">
    <property type="entry name" value="PRK14354.1"/>
    <property type="match status" value="1"/>
</dbReference>
<dbReference type="PANTHER" id="PTHR43584:SF3">
    <property type="entry name" value="BIFUNCTIONAL PROTEIN GLMU"/>
    <property type="match status" value="1"/>
</dbReference>
<dbReference type="PANTHER" id="PTHR43584">
    <property type="entry name" value="NUCLEOTIDYL TRANSFERASE"/>
    <property type="match status" value="1"/>
</dbReference>
<dbReference type="Pfam" id="PF14602">
    <property type="entry name" value="Hexapep_2"/>
    <property type="match status" value="1"/>
</dbReference>
<dbReference type="Pfam" id="PF00483">
    <property type="entry name" value="NTP_transferase"/>
    <property type="match status" value="1"/>
</dbReference>
<dbReference type="SUPFAM" id="SSF53448">
    <property type="entry name" value="Nucleotide-diphospho-sugar transferases"/>
    <property type="match status" value="1"/>
</dbReference>
<dbReference type="SUPFAM" id="SSF51161">
    <property type="entry name" value="Trimeric LpxA-like enzymes"/>
    <property type="match status" value="1"/>
</dbReference>
<dbReference type="PROSITE" id="PS00101">
    <property type="entry name" value="HEXAPEP_TRANSFERASES"/>
    <property type="match status" value="1"/>
</dbReference>
<reference key="1">
    <citation type="journal article" date="2010" name="Genome Biol.">
        <title>Structure and dynamics of the pan-genome of Streptococcus pneumoniae and closely related species.</title>
        <authorList>
            <person name="Donati C."/>
            <person name="Hiller N.L."/>
            <person name="Tettelin H."/>
            <person name="Muzzi A."/>
            <person name="Croucher N.J."/>
            <person name="Angiuoli S.V."/>
            <person name="Oggioni M."/>
            <person name="Dunning Hotopp J.C."/>
            <person name="Hu F.Z."/>
            <person name="Riley D.R."/>
            <person name="Covacci A."/>
            <person name="Mitchell T.J."/>
            <person name="Bentley S.D."/>
            <person name="Kilian M."/>
            <person name="Ehrlich G.D."/>
            <person name="Rappuoli R."/>
            <person name="Moxon E.R."/>
            <person name="Masignani V."/>
        </authorList>
    </citation>
    <scope>NUCLEOTIDE SEQUENCE [LARGE SCALE GENOMIC DNA]</scope>
    <source>
        <strain>Taiwan19F-14</strain>
    </source>
</reference>
<evidence type="ECO:0000255" key="1">
    <source>
        <dbReference type="HAMAP-Rule" id="MF_01631"/>
    </source>
</evidence>
<protein>
    <recommendedName>
        <fullName evidence="1">Bifunctional protein GlmU</fullName>
    </recommendedName>
    <domain>
        <recommendedName>
            <fullName evidence="1">UDP-N-acetylglucosamine pyrophosphorylase</fullName>
            <ecNumber evidence="1">2.7.7.23</ecNumber>
        </recommendedName>
        <alternativeName>
            <fullName evidence="1">N-acetylglucosamine-1-phosphate uridyltransferase</fullName>
        </alternativeName>
    </domain>
    <domain>
        <recommendedName>
            <fullName evidence="1">Glucosamine-1-phosphate N-acetyltransferase</fullName>
            <ecNumber evidence="1">2.3.1.157</ecNumber>
        </recommendedName>
    </domain>
</protein>
<keyword id="KW-0012">Acyltransferase</keyword>
<keyword id="KW-0133">Cell shape</keyword>
<keyword id="KW-0961">Cell wall biogenesis/degradation</keyword>
<keyword id="KW-0963">Cytoplasm</keyword>
<keyword id="KW-0460">Magnesium</keyword>
<keyword id="KW-0479">Metal-binding</keyword>
<keyword id="KW-0511">Multifunctional enzyme</keyword>
<keyword id="KW-0548">Nucleotidyltransferase</keyword>
<keyword id="KW-0573">Peptidoglycan synthesis</keyword>
<keyword id="KW-0677">Repeat</keyword>
<keyword id="KW-0808">Transferase</keyword>
<name>GLMU_STRZT</name>
<gene>
    <name evidence="1" type="primary">glmU</name>
    <name type="ordered locus">SPT_1216</name>
</gene>
<feature type="chain" id="PRO_1000186502" description="Bifunctional protein GlmU">
    <location>
        <begin position="1"/>
        <end position="459"/>
    </location>
</feature>
<feature type="region of interest" description="Pyrophosphorylase" evidence="1">
    <location>
        <begin position="1"/>
        <end position="229"/>
    </location>
</feature>
<feature type="region of interest" description="Linker" evidence="1">
    <location>
        <begin position="230"/>
        <end position="250"/>
    </location>
</feature>
<feature type="region of interest" description="N-acetyltransferase" evidence="1">
    <location>
        <begin position="251"/>
        <end position="459"/>
    </location>
</feature>
<feature type="active site" description="Proton acceptor" evidence="1">
    <location>
        <position position="362"/>
    </location>
</feature>
<feature type="binding site" evidence="1">
    <location>
        <begin position="8"/>
        <end position="11"/>
    </location>
    <ligand>
        <name>UDP-N-acetyl-alpha-D-glucosamine</name>
        <dbReference type="ChEBI" id="CHEBI:57705"/>
    </ligand>
</feature>
<feature type="binding site" evidence="1">
    <location>
        <position position="22"/>
    </location>
    <ligand>
        <name>UDP-N-acetyl-alpha-D-glucosamine</name>
        <dbReference type="ChEBI" id="CHEBI:57705"/>
    </ligand>
</feature>
<feature type="binding site" evidence="1">
    <location>
        <position position="72"/>
    </location>
    <ligand>
        <name>UDP-N-acetyl-alpha-D-glucosamine</name>
        <dbReference type="ChEBI" id="CHEBI:57705"/>
    </ligand>
</feature>
<feature type="binding site" evidence="1">
    <location>
        <begin position="77"/>
        <end position="78"/>
    </location>
    <ligand>
        <name>UDP-N-acetyl-alpha-D-glucosamine</name>
        <dbReference type="ChEBI" id="CHEBI:57705"/>
    </ligand>
</feature>
<feature type="binding site" evidence="1">
    <location>
        <position position="102"/>
    </location>
    <ligand>
        <name>Mg(2+)</name>
        <dbReference type="ChEBI" id="CHEBI:18420"/>
    </ligand>
</feature>
<feature type="binding site" evidence="1">
    <location>
        <position position="139"/>
    </location>
    <ligand>
        <name>UDP-N-acetyl-alpha-D-glucosamine</name>
        <dbReference type="ChEBI" id="CHEBI:57705"/>
    </ligand>
</feature>
<feature type="binding site" evidence="1">
    <location>
        <position position="154"/>
    </location>
    <ligand>
        <name>UDP-N-acetyl-alpha-D-glucosamine</name>
        <dbReference type="ChEBI" id="CHEBI:57705"/>
    </ligand>
</feature>
<feature type="binding site" evidence="1">
    <location>
        <position position="169"/>
    </location>
    <ligand>
        <name>UDP-N-acetyl-alpha-D-glucosamine</name>
        <dbReference type="ChEBI" id="CHEBI:57705"/>
    </ligand>
</feature>
<feature type="binding site" evidence="1">
    <location>
        <position position="227"/>
    </location>
    <ligand>
        <name>Mg(2+)</name>
        <dbReference type="ChEBI" id="CHEBI:18420"/>
    </ligand>
</feature>
<feature type="binding site" evidence="1">
    <location>
        <position position="227"/>
    </location>
    <ligand>
        <name>UDP-N-acetyl-alpha-D-glucosamine</name>
        <dbReference type="ChEBI" id="CHEBI:57705"/>
    </ligand>
</feature>
<feature type="binding site" evidence="1">
    <location>
        <position position="332"/>
    </location>
    <ligand>
        <name>UDP-N-acetyl-alpha-D-glucosamine</name>
        <dbReference type="ChEBI" id="CHEBI:57705"/>
    </ligand>
</feature>
<feature type="binding site" evidence="1">
    <location>
        <position position="350"/>
    </location>
    <ligand>
        <name>UDP-N-acetyl-alpha-D-glucosamine</name>
        <dbReference type="ChEBI" id="CHEBI:57705"/>
    </ligand>
</feature>
<feature type="binding site" evidence="1">
    <location>
        <position position="365"/>
    </location>
    <ligand>
        <name>UDP-N-acetyl-alpha-D-glucosamine</name>
        <dbReference type="ChEBI" id="CHEBI:57705"/>
    </ligand>
</feature>
<feature type="binding site" evidence="1">
    <location>
        <position position="376"/>
    </location>
    <ligand>
        <name>UDP-N-acetyl-alpha-D-glucosamine</name>
        <dbReference type="ChEBI" id="CHEBI:57705"/>
    </ligand>
</feature>
<feature type="binding site" evidence="1">
    <location>
        <position position="379"/>
    </location>
    <ligand>
        <name>acetyl-CoA</name>
        <dbReference type="ChEBI" id="CHEBI:57288"/>
    </ligand>
</feature>
<feature type="binding site" evidence="1">
    <location>
        <begin position="385"/>
        <end position="386"/>
    </location>
    <ligand>
        <name>acetyl-CoA</name>
        <dbReference type="ChEBI" id="CHEBI:57288"/>
    </ligand>
</feature>
<feature type="binding site" evidence="1">
    <location>
        <position position="404"/>
    </location>
    <ligand>
        <name>acetyl-CoA</name>
        <dbReference type="ChEBI" id="CHEBI:57288"/>
    </ligand>
</feature>
<feature type="binding site" evidence="1">
    <location>
        <position position="422"/>
    </location>
    <ligand>
        <name>acetyl-CoA</name>
        <dbReference type="ChEBI" id="CHEBI:57288"/>
    </ligand>
</feature>
<feature type="binding site" evidence="1">
    <location>
        <position position="439"/>
    </location>
    <ligand>
        <name>acetyl-CoA</name>
        <dbReference type="ChEBI" id="CHEBI:57288"/>
    </ligand>
</feature>
<proteinExistence type="inferred from homology"/>
<accession>C1CRR4</accession>
<comment type="function">
    <text evidence="1">Catalyzes the last two sequential reactions in the de novo biosynthetic pathway for UDP-N-acetylglucosamine (UDP-GlcNAc). The C-terminal domain catalyzes the transfer of acetyl group from acetyl coenzyme A to glucosamine-1-phosphate (GlcN-1-P) to produce N-acetylglucosamine-1-phosphate (GlcNAc-1-P), which is converted into UDP-GlcNAc by the transfer of uridine 5-monophosphate (from uridine 5-triphosphate), a reaction catalyzed by the N-terminal domain.</text>
</comment>
<comment type="catalytic activity">
    <reaction evidence="1">
        <text>alpha-D-glucosamine 1-phosphate + acetyl-CoA = N-acetyl-alpha-D-glucosamine 1-phosphate + CoA + H(+)</text>
        <dbReference type="Rhea" id="RHEA:13725"/>
        <dbReference type="ChEBI" id="CHEBI:15378"/>
        <dbReference type="ChEBI" id="CHEBI:57287"/>
        <dbReference type="ChEBI" id="CHEBI:57288"/>
        <dbReference type="ChEBI" id="CHEBI:57776"/>
        <dbReference type="ChEBI" id="CHEBI:58516"/>
        <dbReference type="EC" id="2.3.1.157"/>
    </reaction>
</comment>
<comment type="catalytic activity">
    <reaction evidence="1">
        <text>N-acetyl-alpha-D-glucosamine 1-phosphate + UTP + H(+) = UDP-N-acetyl-alpha-D-glucosamine + diphosphate</text>
        <dbReference type="Rhea" id="RHEA:13509"/>
        <dbReference type="ChEBI" id="CHEBI:15378"/>
        <dbReference type="ChEBI" id="CHEBI:33019"/>
        <dbReference type="ChEBI" id="CHEBI:46398"/>
        <dbReference type="ChEBI" id="CHEBI:57705"/>
        <dbReference type="ChEBI" id="CHEBI:57776"/>
        <dbReference type="EC" id="2.7.7.23"/>
    </reaction>
</comment>
<comment type="cofactor">
    <cofactor evidence="1">
        <name>Mg(2+)</name>
        <dbReference type="ChEBI" id="CHEBI:18420"/>
    </cofactor>
    <text evidence="1">Binds 1 Mg(2+) ion per subunit.</text>
</comment>
<comment type="pathway">
    <text evidence="1">Nucleotide-sugar biosynthesis; UDP-N-acetyl-alpha-D-glucosamine biosynthesis; N-acetyl-alpha-D-glucosamine 1-phosphate from alpha-D-glucosamine 6-phosphate (route II): step 2/2.</text>
</comment>
<comment type="pathway">
    <text evidence="1">Nucleotide-sugar biosynthesis; UDP-N-acetyl-alpha-D-glucosamine biosynthesis; UDP-N-acetyl-alpha-D-glucosamine from N-acetyl-alpha-D-glucosamine 1-phosphate: step 1/1.</text>
</comment>
<comment type="pathway">
    <text evidence="1">Bacterial outer membrane biogenesis; LPS lipid A biosynthesis.</text>
</comment>
<comment type="subunit">
    <text evidence="1">Homotrimer.</text>
</comment>
<comment type="subcellular location">
    <subcellularLocation>
        <location evidence="1">Cytoplasm</location>
    </subcellularLocation>
</comment>
<comment type="similarity">
    <text evidence="1">In the N-terminal section; belongs to the N-acetylglucosamine-1-phosphate uridyltransferase family.</text>
</comment>
<comment type="similarity">
    <text evidence="1">In the C-terminal section; belongs to the transferase hexapeptide repeat family.</text>
</comment>
<organism>
    <name type="scientific">Streptococcus pneumoniae (strain Taiwan19F-14)</name>
    <dbReference type="NCBI Taxonomy" id="487213"/>
    <lineage>
        <taxon>Bacteria</taxon>
        <taxon>Bacillati</taxon>
        <taxon>Bacillota</taxon>
        <taxon>Bacilli</taxon>
        <taxon>Lactobacillales</taxon>
        <taxon>Streptococcaceae</taxon>
        <taxon>Streptococcus</taxon>
    </lineage>
</organism>